<keyword id="KW-1032">Host cell membrane</keyword>
<keyword id="KW-1035">Host cytoplasm</keyword>
<keyword id="KW-1037">Host cytoskeleton</keyword>
<keyword id="KW-1038">Host endoplasmic reticulum</keyword>
<keyword id="KW-1043">Host membrane</keyword>
<keyword id="KW-0945">Host-virus interaction</keyword>
<keyword id="KW-1090">Inhibition of host innate immune response by virus</keyword>
<keyword id="KW-0449">Lipoprotein</keyword>
<keyword id="KW-0472">Membrane</keyword>
<keyword id="KW-0597">Phosphoprotein</keyword>
<keyword id="KW-0899">Viral immunoevasion</keyword>
<keyword id="KW-0946">Virion</keyword>
<protein>
    <recommendedName>
        <fullName>Protein ORF3</fullName>
        <shortName>pORF3</shortName>
    </recommendedName>
</protein>
<comment type="function">
    <text evidence="2">Small multifunctional phosphoprotein involved in virion morphogenesis, egress and counteracting host innate immunity. Plays critical roles in the final steps of viral release by interacting with host TSG101, a member of the vacuolar protein-sorting pathway and using other cellular host proteins involved in vesicle formation pathway. Also acts as a viroporin and forms ion conductive pores allowing viral particle release. Impairs the generation of type I interferon by down-regulating host TLR3 and TLR7 as well as their downstream signaling pathways. Down-regulates the phosphorylation of host IRF3 via the interaction with host SIRP-alpha, thereby inhibiting IFN-I expression. Interacts with host microtubules.</text>
</comment>
<comment type="subunit">
    <text evidence="2 4">Forms homooligomers (By similarity). Interacts with host SRC, HCK, FYN, PIK3R3 and GRB2 (via SH3 domain); binding does not activate the kinases (By similarity). Interacts with host AMBP/bikunin and AMBP/alpha-1-microglobulin peptides (PubMed:16140784). Interacts with host HPX/hemopexin. Interacts (when phosphorylated) with capsid protein ORF2 (By similarity). Interacts with host TSG101; this interaction plays a role in viral release from the host cell (By similarity). Interacts with host SIRPA; this interaction down-regulates the phosphorylation of host IRF3 (By similarity).</text>
</comment>
<comment type="subcellular location">
    <subcellularLocation>
        <location evidence="2">Host endoplasmic reticulum membrane</location>
        <topology evidence="2">Lipid-anchor</topology>
    </subcellularLocation>
    <subcellularLocation>
        <location evidence="2">Host cytoplasm</location>
        <location evidence="2">Host cytoskeleton</location>
    </subcellularLocation>
    <subcellularLocation>
        <location evidence="2">Virion</location>
    </subcellularLocation>
    <subcellularLocation>
        <location evidence="2">Host cell membrane</location>
        <topology evidence="2">Lipid-anchor</topology>
    </subcellularLocation>
    <text evidence="2">The N-terminal region seems to associate with the cytoskeleton probably via one of its hydrophobic regions. Present on the surface of the membrane-wrapped virions.</text>
</comment>
<comment type="domain">
    <text evidence="2">The PSAP motif is necessary for the release of membrane-wrapped virions from infected cells.</text>
</comment>
<comment type="PTM">
    <text evidence="2">Palmitoylated in the N-terminus.</text>
</comment>
<comment type="miscellaneous">
    <text evidence="2">The viral particles present in feces and bile are non-enveloped, while those in circulating blood and culture supernatants are covered with a cellular membrane (quasi-enveloped).</text>
</comment>
<comment type="similarity">
    <text evidence="5">Belongs to the hepevirus ORF3 protein family.</text>
</comment>
<comment type="sequence caution" evidence="5">
    <conflict type="erroneous initiation">
        <sequence resource="EMBL-CDS" id="AAA45731"/>
    </conflict>
</comment>
<organism>
    <name type="scientific">Hepatitis E virus genotype 2 (isolate Human/Mexico)</name>
    <name type="common">HEV-2</name>
    <dbReference type="NCBI Taxonomy" id="31768"/>
    <lineage>
        <taxon>Viruses</taxon>
        <taxon>Riboviria</taxon>
        <taxon>Orthornavirae</taxon>
        <taxon>Kitrinoviricota</taxon>
        <taxon>Alsuviricetes</taxon>
        <taxon>Hepelivirales</taxon>
        <taxon>Hepeviridae</taxon>
        <taxon>Orthohepevirinae</taxon>
        <taxon>Paslahepevirus</taxon>
        <taxon>Hepatitis E virus</taxon>
    </lineage>
</organism>
<accession>Q03499</accession>
<organismHost>
    <name type="scientific">Bandicota bengalensis</name>
    <name type="common">lesser bandicoot rat</name>
    <dbReference type="NCBI Taxonomy" id="69079"/>
</organismHost>
<organismHost>
    <name type="scientific">Callithrix</name>
    <dbReference type="NCBI Taxonomy" id="9481"/>
</organismHost>
<organismHost>
    <name type="scientific">Cercopithecus hamlyni</name>
    <name type="common">Owl-faced monkey</name>
    <name type="synonym">Hamlyn's monkey</name>
    <dbReference type="NCBI Taxonomy" id="9536"/>
</organismHost>
<organismHost>
    <name type="scientific">Chlorocebus aethiops</name>
    <name type="common">Green monkey</name>
    <name type="synonym">Cercopithecus aethiops</name>
    <dbReference type="NCBI Taxonomy" id="9534"/>
</organismHost>
<organismHost>
    <name type="scientific">Gallus gallus</name>
    <name type="common">Chicken</name>
    <dbReference type="NCBI Taxonomy" id="9031"/>
</organismHost>
<organismHost>
    <name type="scientific">Homo sapiens</name>
    <name type="common">Human</name>
    <dbReference type="NCBI Taxonomy" id="9606"/>
</organismHost>
<organismHost>
    <name type="scientific">Macaca</name>
    <name type="common">macaques</name>
    <dbReference type="NCBI Taxonomy" id="9539"/>
</organismHost>
<organismHost>
    <name type="scientific">Mus musculus</name>
    <name type="common">Mouse</name>
    <dbReference type="NCBI Taxonomy" id="10090"/>
</organismHost>
<organismHost>
    <name type="scientific">Pan troglodytes</name>
    <name type="common">Chimpanzee</name>
    <dbReference type="NCBI Taxonomy" id="9598"/>
</organismHost>
<organismHost>
    <name type="scientific">Saimiri</name>
    <name type="common">squirrel monkeys</name>
    <dbReference type="NCBI Taxonomy" id="9520"/>
</organismHost>
<organismHost>
    <name type="scientific">Sus scrofa</name>
    <name type="common">Pig</name>
    <dbReference type="NCBI Taxonomy" id="9823"/>
</organismHost>
<reference key="1">
    <citation type="journal article" date="1992" name="Virology">
        <title>Molecular cloning and sequencing of the Mexico isolate of hepatitis E virus (HEV).</title>
        <authorList>
            <person name="Huang C.C."/>
            <person name="Nguyen D."/>
            <person name="Fernandez J."/>
            <person name="Yun K.Y."/>
            <person name="Fry K.E."/>
            <person name="Bradley D.W."/>
            <person name="Tam A.W."/>
            <person name="Reyes G.R."/>
        </authorList>
    </citation>
    <scope>NUCLEOTIDE SEQUENCE [GENOMIC RNA]</scope>
</reference>
<reference key="2">
    <citation type="journal article" date="2002" name="J. Biol. Chem.">
        <title>The phosphorylated form of the ORF3 protein of hepatitis E virus interacts with its non-glycosylated form of the major capsid protein, ORF2.</title>
        <authorList>
            <person name="Tyagi S."/>
            <person name="Korkaya H."/>
            <person name="Zafrullah M."/>
            <person name="Jameel S."/>
            <person name="Lal S.K."/>
        </authorList>
    </citation>
    <scope>LACK OF INTERACTION WITH THE CAPSID PROTEIN</scope>
</reference>
<reference key="3">
    <citation type="journal article" date="2005" name="J. Virol.">
        <title>The 41-amino-acid C-terminal region of the hepatitis E virus ORF3 protein interacts with bikunin, a Kunitz-type serine protease inhibitor.</title>
        <authorList>
            <person name="Tyagi S."/>
            <person name="Surjit M."/>
            <person name="Lal S.K."/>
        </authorList>
    </citation>
    <scope>INTERACTION WITH HUMAN AMBP/BIKUNIN</scope>
</reference>
<feature type="chain" id="PRO_0000100138" description="Protein ORF3">
    <location>
        <begin position="1"/>
        <end position="114"/>
    </location>
</feature>
<feature type="region of interest" description="Hydrophobic">
    <location>
        <begin position="6"/>
        <end position="22"/>
    </location>
</feature>
<feature type="region of interest" description="Interaction with host HPX" evidence="1">
    <location>
        <begin position="28"/>
        <end position="68"/>
    </location>
</feature>
<feature type="region of interest" description="Hydrophobic">
    <location>
        <begin position="33"/>
        <end position="53"/>
    </location>
</feature>
<feature type="region of interest" description="Homodimerization, and interaction with host AMBP/bikunin" evidence="1">
    <location>
        <begin position="72"/>
        <end position="114"/>
    </location>
</feature>
<feature type="region of interest" description="Disordered" evidence="3">
    <location>
        <begin position="91"/>
        <end position="114"/>
    </location>
</feature>
<feature type="region of interest" description="Interaction with host SRC, HCK, FYN, PIK3R3 and GRB2" evidence="1">
    <location>
        <begin position="95"/>
        <end position="104"/>
    </location>
</feature>
<feature type="short sequence motif" description="PTAP/PSAP motif" evidence="2">
    <location>
        <begin position="96"/>
        <end position="99"/>
    </location>
</feature>
<gene>
    <name type="ORF">ORF3</name>
</gene>
<name>ORF3_HEVME</name>
<proteinExistence type="evidence at protein level"/>
<evidence type="ECO:0000250" key="1"/>
<evidence type="ECO:0000250" key="2">
    <source>
        <dbReference type="UniProtKB" id="Q81870"/>
    </source>
</evidence>
<evidence type="ECO:0000256" key="3">
    <source>
        <dbReference type="SAM" id="MobiDB-lite"/>
    </source>
</evidence>
<evidence type="ECO:0000269" key="4">
    <source>
    </source>
</evidence>
<evidence type="ECO:0000305" key="5"/>
<dbReference type="EMBL" id="M74506">
    <property type="protein sequence ID" value="AAA45731.1"/>
    <property type="status" value="ALT_INIT"/>
    <property type="molecule type" value="Genomic_RNA"/>
</dbReference>
<dbReference type="PIR" id="C44212">
    <property type="entry name" value="C44212"/>
</dbReference>
<dbReference type="MINT" id="Q03499"/>
<dbReference type="Proteomes" id="UP000007245">
    <property type="component" value="Segment"/>
</dbReference>
<dbReference type="GO" id="GO:0044167">
    <property type="term" value="C:host cell endoplasmic reticulum membrane"/>
    <property type="evidence" value="ECO:0007669"/>
    <property type="project" value="UniProtKB-SubCell"/>
</dbReference>
<dbReference type="GO" id="GO:0020002">
    <property type="term" value="C:host cell plasma membrane"/>
    <property type="evidence" value="ECO:0007669"/>
    <property type="project" value="UniProtKB-SubCell"/>
</dbReference>
<dbReference type="GO" id="GO:0044163">
    <property type="term" value="C:host cytoskeleton"/>
    <property type="evidence" value="ECO:0007669"/>
    <property type="project" value="UniProtKB-SubCell"/>
</dbReference>
<dbReference type="GO" id="GO:0016020">
    <property type="term" value="C:membrane"/>
    <property type="evidence" value="ECO:0007669"/>
    <property type="project" value="UniProtKB-KW"/>
</dbReference>
<dbReference type="GO" id="GO:0044423">
    <property type="term" value="C:virion component"/>
    <property type="evidence" value="ECO:0007669"/>
    <property type="project" value="UniProtKB-KW"/>
</dbReference>
<dbReference type="GO" id="GO:0052170">
    <property type="term" value="P:symbiont-mediated suppression of host innate immune response"/>
    <property type="evidence" value="ECO:0007669"/>
    <property type="project" value="UniProtKB-KW"/>
</dbReference>
<dbReference type="InterPro" id="IPR003384">
    <property type="entry name" value="HEV_Orf2"/>
</dbReference>
<dbReference type="Pfam" id="PF02444">
    <property type="entry name" value="HEV_ORF1"/>
    <property type="match status" value="1"/>
</dbReference>
<sequence>MGSPPCALGLFCCCSSCFCLCCPRHRPVSRLAAVVGGAAAVPAVVSGVTGLILSPSQSPIFIQPTPLPQTLPLRPGLDLAFANQPGHLAPLGEIRPSAPPLPPVADLPQPGLRR</sequence>